<organism>
    <name type="scientific">Salmonella paratyphi A (strain AKU_12601)</name>
    <dbReference type="NCBI Taxonomy" id="554290"/>
    <lineage>
        <taxon>Bacteria</taxon>
        <taxon>Pseudomonadati</taxon>
        <taxon>Pseudomonadota</taxon>
        <taxon>Gammaproteobacteria</taxon>
        <taxon>Enterobacterales</taxon>
        <taxon>Enterobacteriaceae</taxon>
        <taxon>Salmonella</taxon>
    </lineage>
</organism>
<keyword id="KW-0004">4Fe-4S</keyword>
<keyword id="KW-0963">Cytoplasm</keyword>
<keyword id="KW-0408">Iron</keyword>
<keyword id="KW-0411">Iron-sulfur</keyword>
<keyword id="KW-0479">Metal-binding</keyword>
<keyword id="KW-0949">S-adenosyl-L-methionine</keyword>
<keyword id="KW-0808">Transferase</keyword>
<accession>B5BBX8</accession>
<reference key="1">
    <citation type="journal article" date="2009" name="BMC Genomics">
        <title>Pseudogene accumulation in the evolutionary histories of Salmonella enterica serovars Paratyphi A and Typhi.</title>
        <authorList>
            <person name="Holt K.E."/>
            <person name="Thomson N.R."/>
            <person name="Wain J."/>
            <person name="Langridge G.C."/>
            <person name="Hasan R."/>
            <person name="Bhutta Z.A."/>
            <person name="Quail M.A."/>
            <person name="Norbertczak H."/>
            <person name="Walker D."/>
            <person name="Simmonds M."/>
            <person name="White B."/>
            <person name="Bason N."/>
            <person name="Mungall K."/>
            <person name="Dougan G."/>
            <person name="Parkhill J."/>
        </authorList>
    </citation>
    <scope>NUCLEOTIDE SEQUENCE [LARGE SCALE GENOMIC DNA]</scope>
    <source>
        <strain>AKU_12601</strain>
    </source>
</reference>
<evidence type="ECO:0000255" key="1">
    <source>
        <dbReference type="HAMAP-Rule" id="MF_01865"/>
    </source>
</evidence>
<evidence type="ECO:0000255" key="2">
    <source>
        <dbReference type="PROSITE-ProRule" id="PRU01266"/>
    </source>
</evidence>
<feature type="chain" id="PRO_0000374994" description="Ribosomal protein uS12 methylthiotransferase RimO">
    <location>
        <begin position="1"/>
        <end position="441"/>
    </location>
</feature>
<feature type="domain" description="MTTase N-terminal" evidence="1">
    <location>
        <begin position="8"/>
        <end position="118"/>
    </location>
</feature>
<feature type="domain" description="Radical SAM core" evidence="2">
    <location>
        <begin position="136"/>
        <end position="373"/>
    </location>
</feature>
<feature type="domain" description="TRAM" evidence="1">
    <location>
        <begin position="376"/>
        <end position="441"/>
    </location>
</feature>
<feature type="binding site" evidence="1">
    <location>
        <position position="17"/>
    </location>
    <ligand>
        <name>[4Fe-4S] cluster</name>
        <dbReference type="ChEBI" id="CHEBI:49883"/>
        <label>1</label>
    </ligand>
</feature>
<feature type="binding site" evidence="1">
    <location>
        <position position="53"/>
    </location>
    <ligand>
        <name>[4Fe-4S] cluster</name>
        <dbReference type="ChEBI" id="CHEBI:49883"/>
        <label>1</label>
    </ligand>
</feature>
<feature type="binding site" evidence="1">
    <location>
        <position position="82"/>
    </location>
    <ligand>
        <name>[4Fe-4S] cluster</name>
        <dbReference type="ChEBI" id="CHEBI:49883"/>
        <label>1</label>
    </ligand>
</feature>
<feature type="binding site" evidence="1">
    <location>
        <position position="150"/>
    </location>
    <ligand>
        <name>[4Fe-4S] cluster</name>
        <dbReference type="ChEBI" id="CHEBI:49883"/>
        <label>2</label>
        <note>4Fe-4S-S-AdoMet</note>
    </ligand>
</feature>
<feature type="binding site" evidence="1">
    <location>
        <position position="154"/>
    </location>
    <ligand>
        <name>[4Fe-4S] cluster</name>
        <dbReference type="ChEBI" id="CHEBI:49883"/>
        <label>2</label>
        <note>4Fe-4S-S-AdoMet</note>
    </ligand>
</feature>
<feature type="binding site" evidence="1">
    <location>
        <position position="157"/>
    </location>
    <ligand>
        <name>[4Fe-4S] cluster</name>
        <dbReference type="ChEBI" id="CHEBI:49883"/>
        <label>2</label>
        <note>4Fe-4S-S-AdoMet</note>
    </ligand>
</feature>
<proteinExistence type="inferred from homology"/>
<dbReference type="EC" id="2.8.4.4" evidence="1"/>
<dbReference type="EMBL" id="FM200053">
    <property type="protein sequence ID" value="CAR59967.1"/>
    <property type="molecule type" value="Genomic_DNA"/>
</dbReference>
<dbReference type="RefSeq" id="WP_000073317.1">
    <property type="nucleotide sequence ID" value="NC_011147.1"/>
</dbReference>
<dbReference type="SMR" id="B5BBX8"/>
<dbReference type="KEGG" id="sek:SSPA1773"/>
<dbReference type="HOGENOM" id="CLU_018697_0_0_6"/>
<dbReference type="Proteomes" id="UP000001869">
    <property type="component" value="Chromosome"/>
</dbReference>
<dbReference type="GO" id="GO:0005829">
    <property type="term" value="C:cytosol"/>
    <property type="evidence" value="ECO:0007669"/>
    <property type="project" value="TreeGrafter"/>
</dbReference>
<dbReference type="GO" id="GO:0051539">
    <property type="term" value="F:4 iron, 4 sulfur cluster binding"/>
    <property type="evidence" value="ECO:0007669"/>
    <property type="project" value="UniProtKB-UniRule"/>
</dbReference>
<dbReference type="GO" id="GO:0035599">
    <property type="term" value="F:aspartic acid methylthiotransferase activity"/>
    <property type="evidence" value="ECO:0007669"/>
    <property type="project" value="TreeGrafter"/>
</dbReference>
<dbReference type="GO" id="GO:0046872">
    <property type="term" value="F:metal ion binding"/>
    <property type="evidence" value="ECO:0007669"/>
    <property type="project" value="UniProtKB-KW"/>
</dbReference>
<dbReference type="GO" id="GO:0103039">
    <property type="term" value="F:protein methylthiotransferase activity"/>
    <property type="evidence" value="ECO:0007669"/>
    <property type="project" value="UniProtKB-EC"/>
</dbReference>
<dbReference type="GO" id="GO:0006400">
    <property type="term" value="P:tRNA modification"/>
    <property type="evidence" value="ECO:0007669"/>
    <property type="project" value="InterPro"/>
</dbReference>
<dbReference type="CDD" id="cd01335">
    <property type="entry name" value="Radical_SAM"/>
    <property type="match status" value="1"/>
</dbReference>
<dbReference type="FunFam" id="2.40.50.140:FF:000060">
    <property type="entry name" value="Ribosomal protein S12 methylthiotransferase RimO"/>
    <property type="match status" value="1"/>
</dbReference>
<dbReference type="FunFam" id="3.40.50.12160:FF:000002">
    <property type="entry name" value="Ribosomal protein S12 methylthiotransferase RimO"/>
    <property type="match status" value="1"/>
</dbReference>
<dbReference type="FunFam" id="3.80.30.20:FF:000001">
    <property type="entry name" value="tRNA-2-methylthio-N(6)-dimethylallyladenosine synthase 2"/>
    <property type="match status" value="1"/>
</dbReference>
<dbReference type="Gene3D" id="3.40.50.12160">
    <property type="entry name" value="Methylthiotransferase, N-terminal domain"/>
    <property type="match status" value="1"/>
</dbReference>
<dbReference type="Gene3D" id="2.40.50.140">
    <property type="entry name" value="Nucleic acid-binding proteins"/>
    <property type="match status" value="1"/>
</dbReference>
<dbReference type="Gene3D" id="3.80.30.20">
    <property type="entry name" value="tm_1862 like domain"/>
    <property type="match status" value="1"/>
</dbReference>
<dbReference type="HAMAP" id="MF_01865">
    <property type="entry name" value="MTTase_RimO"/>
    <property type="match status" value="1"/>
</dbReference>
<dbReference type="InterPro" id="IPR006638">
    <property type="entry name" value="Elp3/MiaA/NifB-like_rSAM"/>
</dbReference>
<dbReference type="InterPro" id="IPR005839">
    <property type="entry name" value="Methylthiotransferase"/>
</dbReference>
<dbReference type="InterPro" id="IPR020612">
    <property type="entry name" value="Methylthiotransferase_CS"/>
</dbReference>
<dbReference type="InterPro" id="IPR013848">
    <property type="entry name" value="Methylthiotransferase_N"/>
</dbReference>
<dbReference type="InterPro" id="IPR038135">
    <property type="entry name" value="Methylthiotransferase_N_sf"/>
</dbReference>
<dbReference type="InterPro" id="IPR012340">
    <property type="entry name" value="NA-bd_OB-fold"/>
</dbReference>
<dbReference type="InterPro" id="IPR005840">
    <property type="entry name" value="Ribosomal_uS12_MeSTrfase_RimO"/>
</dbReference>
<dbReference type="InterPro" id="IPR007197">
    <property type="entry name" value="rSAM"/>
</dbReference>
<dbReference type="InterPro" id="IPR023404">
    <property type="entry name" value="rSAM_horseshoe"/>
</dbReference>
<dbReference type="InterPro" id="IPR002792">
    <property type="entry name" value="TRAM_dom"/>
</dbReference>
<dbReference type="NCBIfam" id="TIGR01125">
    <property type="entry name" value="30S ribosomal protein S12 methylthiotransferase RimO"/>
    <property type="match status" value="1"/>
</dbReference>
<dbReference type="NCBIfam" id="TIGR00089">
    <property type="entry name" value="MiaB/RimO family radical SAM methylthiotransferase"/>
    <property type="match status" value="1"/>
</dbReference>
<dbReference type="PANTHER" id="PTHR43837">
    <property type="entry name" value="RIBOSOMAL PROTEIN S12 METHYLTHIOTRANSFERASE RIMO"/>
    <property type="match status" value="1"/>
</dbReference>
<dbReference type="PANTHER" id="PTHR43837:SF1">
    <property type="entry name" value="RIBOSOMAL PROTEIN US12 METHYLTHIOTRANSFERASE RIMO"/>
    <property type="match status" value="1"/>
</dbReference>
<dbReference type="Pfam" id="PF04055">
    <property type="entry name" value="Radical_SAM"/>
    <property type="match status" value="1"/>
</dbReference>
<dbReference type="Pfam" id="PF18693">
    <property type="entry name" value="TRAM_2"/>
    <property type="match status" value="1"/>
</dbReference>
<dbReference type="Pfam" id="PF00919">
    <property type="entry name" value="UPF0004"/>
    <property type="match status" value="1"/>
</dbReference>
<dbReference type="SFLD" id="SFLDG01082">
    <property type="entry name" value="B12-binding_domain_containing"/>
    <property type="match status" value="1"/>
</dbReference>
<dbReference type="SFLD" id="SFLDG01061">
    <property type="entry name" value="methylthiotransferase"/>
    <property type="match status" value="1"/>
</dbReference>
<dbReference type="SFLD" id="SFLDF00274">
    <property type="entry name" value="ribosomal_protein_S12_methylth"/>
    <property type="match status" value="1"/>
</dbReference>
<dbReference type="SMART" id="SM00729">
    <property type="entry name" value="Elp3"/>
    <property type="match status" value="1"/>
</dbReference>
<dbReference type="SUPFAM" id="SSF102114">
    <property type="entry name" value="Radical SAM enzymes"/>
    <property type="match status" value="1"/>
</dbReference>
<dbReference type="PROSITE" id="PS51449">
    <property type="entry name" value="MTTASE_N"/>
    <property type="match status" value="1"/>
</dbReference>
<dbReference type="PROSITE" id="PS01278">
    <property type="entry name" value="MTTASE_RADICAL"/>
    <property type="match status" value="1"/>
</dbReference>
<dbReference type="PROSITE" id="PS51918">
    <property type="entry name" value="RADICAL_SAM"/>
    <property type="match status" value="1"/>
</dbReference>
<dbReference type="PROSITE" id="PS50926">
    <property type="entry name" value="TRAM"/>
    <property type="match status" value="1"/>
</dbReference>
<gene>
    <name evidence="1" type="primary">rimO</name>
    <name type="ordered locus">SSPA1773</name>
</gene>
<sequence length="441" mass="49597">MSNVTHQPKIGFVSLGCPKNLVDSERILTELRTEGYDVVPRYDDADMVIVNTCGFIDSAVQESLEAIGEALNENGKVIVTGCLGAKEDQIREVHPKVLEITGPHSYEQVLQHVHHYVPKPKHNPFLSLVPEQGVKLTPRHYAYLKISEGCNHRCTFCIIPSMRGDLVSRPIGDVLSEAKRLVDAGVKEILVISQDTSAYGVDVKHRTGFHNGEPVKTSMVSLCEQLSKLGVWTRLHYVYPYPHVDDVIPLMAEGKILPYLDIPLQHASPRILKLMKRPGSVDRQLARIKQWREICPELTLRSTFIVGFPGETEEDFQMLLDFLKEARLDRVGCFKYSPVEGAGANELPDQVPEEVKEERWNRFMQLQQQISAERLQEKVGREILVIVDEVDEEGAIGRSMADAPEIDGAVYLNGETNVKPGDIVRVKVENADEYDLWGSRV</sequence>
<name>RIMO_SALPK</name>
<protein>
    <recommendedName>
        <fullName evidence="1">Ribosomal protein uS12 methylthiotransferase RimO</fullName>
        <shortName evidence="1">uS12 MTTase</shortName>
        <shortName evidence="1">uS12 methylthiotransferase</shortName>
        <ecNumber evidence="1">2.8.4.4</ecNumber>
    </recommendedName>
    <alternativeName>
        <fullName evidence="1">Ribosomal protein uS12 (aspartate-C(3))-methylthiotransferase</fullName>
    </alternativeName>
    <alternativeName>
        <fullName evidence="1">Ribosome maturation factor RimO</fullName>
    </alternativeName>
</protein>
<comment type="function">
    <text evidence="1">Catalyzes the methylthiolation of an aspartic acid residue of ribosomal protein uS12.</text>
</comment>
<comment type="catalytic activity">
    <reaction evidence="1">
        <text>L-aspartate(89)-[ribosomal protein uS12]-hydrogen + (sulfur carrier)-SH + AH2 + 2 S-adenosyl-L-methionine = 3-methylsulfanyl-L-aspartate(89)-[ribosomal protein uS12]-hydrogen + (sulfur carrier)-H + 5'-deoxyadenosine + L-methionine + A + S-adenosyl-L-homocysteine + 2 H(+)</text>
        <dbReference type="Rhea" id="RHEA:37087"/>
        <dbReference type="Rhea" id="RHEA-COMP:10460"/>
        <dbReference type="Rhea" id="RHEA-COMP:10461"/>
        <dbReference type="Rhea" id="RHEA-COMP:14737"/>
        <dbReference type="Rhea" id="RHEA-COMP:14739"/>
        <dbReference type="ChEBI" id="CHEBI:13193"/>
        <dbReference type="ChEBI" id="CHEBI:15378"/>
        <dbReference type="ChEBI" id="CHEBI:17319"/>
        <dbReference type="ChEBI" id="CHEBI:17499"/>
        <dbReference type="ChEBI" id="CHEBI:29917"/>
        <dbReference type="ChEBI" id="CHEBI:29961"/>
        <dbReference type="ChEBI" id="CHEBI:57844"/>
        <dbReference type="ChEBI" id="CHEBI:57856"/>
        <dbReference type="ChEBI" id="CHEBI:59789"/>
        <dbReference type="ChEBI" id="CHEBI:64428"/>
        <dbReference type="ChEBI" id="CHEBI:73599"/>
        <dbReference type="EC" id="2.8.4.4"/>
    </reaction>
</comment>
<comment type="cofactor">
    <cofactor evidence="1">
        <name>[4Fe-4S] cluster</name>
        <dbReference type="ChEBI" id="CHEBI:49883"/>
    </cofactor>
    <text evidence="1">Binds 2 [4Fe-4S] clusters. One cluster is coordinated with 3 cysteines and an exchangeable S-adenosyl-L-methionine.</text>
</comment>
<comment type="subcellular location">
    <subcellularLocation>
        <location evidence="1">Cytoplasm</location>
    </subcellularLocation>
</comment>
<comment type="similarity">
    <text evidence="1">Belongs to the methylthiotransferase family. RimO subfamily.</text>
</comment>